<gene>
    <name evidence="1" type="primary">citD</name>
    <name type="ordered locus">EFER_0033</name>
</gene>
<protein>
    <recommendedName>
        <fullName evidence="1">Citrate lyase acyl carrier protein</fullName>
    </recommendedName>
    <alternativeName>
        <fullName evidence="1">Citrate lyase gamma chain</fullName>
    </alternativeName>
</protein>
<accession>B7LVP5</accession>
<reference key="1">
    <citation type="journal article" date="2009" name="PLoS Genet.">
        <title>Organised genome dynamics in the Escherichia coli species results in highly diverse adaptive paths.</title>
        <authorList>
            <person name="Touchon M."/>
            <person name="Hoede C."/>
            <person name="Tenaillon O."/>
            <person name="Barbe V."/>
            <person name="Baeriswyl S."/>
            <person name="Bidet P."/>
            <person name="Bingen E."/>
            <person name="Bonacorsi S."/>
            <person name="Bouchier C."/>
            <person name="Bouvet O."/>
            <person name="Calteau A."/>
            <person name="Chiapello H."/>
            <person name="Clermont O."/>
            <person name="Cruveiller S."/>
            <person name="Danchin A."/>
            <person name="Diard M."/>
            <person name="Dossat C."/>
            <person name="Karoui M.E."/>
            <person name="Frapy E."/>
            <person name="Garry L."/>
            <person name="Ghigo J.M."/>
            <person name="Gilles A.M."/>
            <person name="Johnson J."/>
            <person name="Le Bouguenec C."/>
            <person name="Lescat M."/>
            <person name="Mangenot S."/>
            <person name="Martinez-Jehanne V."/>
            <person name="Matic I."/>
            <person name="Nassif X."/>
            <person name="Oztas S."/>
            <person name="Petit M.A."/>
            <person name="Pichon C."/>
            <person name="Rouy Z."/>
            <person name="Ruf C.S."/>
            <person name="Schneider D."/>
            <person name="Tourret J."/>
            <person name="Vacherie B."/>
            <person name="Vallenet D."/>
            <person name="Medigue C."/>
            <person name="Rocha E.P.C."/>
            <person name="Denamur E."/>
        </authorList>
    </citation>
    <scope>NUCLEOTIDE SEQUENCE [LARGE SCALE GENOMIC DNA]</scope>
    <source>
        <strain>ATCC 35469 / DSM 13698 / BCRC 15582 / CCUG 18766 / IAM 14443 / JCM 21226 / LMG 7866 / NBRC 102419 / NCTC 12128 / CDC 0568-73</strain>
    </source>
</reference>
<dbReference type="EMBL" id="CU928158">
    <property type="protein sequence ID" value="CAQ87619.1"/>
    <property type="molecule type" value="Genomic_DNA"/>
</dbReference>
<dbReference type="RefSeq" id="WP_000402611.1">
    <property type="nucleotide sequence ID" value="NC_011740.1"/>
</dbReference>
<dbReference type="SMR" id="B7LVP5"/>
<dbReference type="GeneID" id="75058879"/>
<dbReference type="KEGG" id="efe:EFER_0033"/>
<dbReference type="HOGENOM" id="CLU_158489_0_0_6"/>
<dbReference type="OrthoDB" id="9798736at2"/>
<dbReference type="Proteomes" id="UP000000745">
    <property type="component" value="Chromosome"/>
</dbReference>
<dbReference type="GO" id="GO:0005737">
    <property type="term" value="C:cytoplasm"/>
    <property type="evidence" value="ECO:0007669"/>
    <property type="project" value="UniProtKB-SubCell"/>
</dbReference>
<dbReference type="HAMAP" id="MF_00805">
    <property type="entry name" value="CitD"/>
    <property type="match status" value="1"/>
</dbReference>
<dbReference type="InterPro" id="IPR006495">
    <property type="entry name" value="CitD"/>
</dbReference>
<dbReference type="InterPro" id="IPR023439">
    <property type="entry name" value="Mal_deCO2ase/Cit_lyase_ACP"/>
</dbReference>
<dbReference type="NCBIfam" id="TIGR01608">
    <property type="entry name" value="citD"/>
    <property type="match status" value="1"/>
</dbReference>
<dbReference type="NCBIfam" id="NF009726">
    <property type="entry name" value="PRK13253.1"/>
    <property type="match status" value="1"/>
</dbReference>
<dbReference type="Pfam" id="PF06857">
    <property type="entry name" value="ACP"/>
    <property type="match status" value="1"/>
</dbReference>
<dbReference type="PIRSF" id="PIRSF002736">
    <property type="entry name" value="Citrt_lyas_gamma"/>
    <property type="match status" value="1"/>
</dbReference>
<name>CITD_ESCF3</name>
<feature type="chain" id="PRO_1000133971" description="Citrate lyase acyl carrier protein">
    <location>
        <begin position="1"/>
        <end position="97"/>
    </location>
</feature>
<feature type="modified residue" description="O-(phosphoribosyl dephospho-coenzyme A)serine" evidence="1">
    <location>
        <position position="14"/>
    </location>
</feature>
<organism>
    <name type="scientific">Escherichia fergusonii (strain ATCC 35469 / DSM 13698 / CCUG 18766 / IAM 14443 / JCM 21226 / LMG 7866 / NBRC 102419 / NCTC 12128 / CDC 0568-73)</name>
    <dbReference type="NCBI Taxonomy" id="585054"/>
    <lineage>
        <taxon>Bacteria</taxon>
        <taxon>Pseudomonadati</taxon>
        <taxon>Pseudomonadota</taxon>
        <taxon>Gammaproteobacteria</taxon>
        <taxon>Enterobacterales</taxon>
        <taxon>Enterobacteriaceae</taxon>
        <taxon>Escherichia</taxon>
    </lineage>
</organism>
<comment type="function">
    <text evidence="1">Covalent carrier of the coenzyme of citrate lyase.</text>
</comment>
<comment type="subunit">
    <text evidence="1">Oligomer with a subunit composition of (alpha,beta,gamma)6.</text>
</comment>
<comment type="subcellular location">
    <subcellularLocation>
        <location evidence="1">Cytoplasm</location>
    </subcellularLocation>
</comment>
<comment type="similarity">
    <text evidence="1">Belongs to the CitD family.</text>
</comment>
<keyword id="KW-0963">Cytoplasm</keyword>
<keyword id="KW-0597">Phosphoprotein</keyword>
<evidence type="ECO:0000255" key="1">
    <source>
        <dbReference type="HAMAP-Rule" id="MF_00805"/>
    </source>
</evidence>
<proteinExistence type="inferred from homology"/>
<sequence>MEIIKDALAGTLESSDVMVRIGPCDEPGIHLELESLVKQQFGNAIERVARETLAKLGVERAHVVIDDKGALECVLRARVQAAVMRAAEQTEIQWGAI</sequence>